<organism>
    <name type="scientific">Borreliella burgdorferi (strain ATCC 35210 / DSM 4680 / CIP 102532 / B31)</name>
    <name type="common">Borrelia burgdorferi</name>
    <dbReference type="NCBI Taxonomy" id="224326"/>
    <lineage>
        <taxon>Bacteria</taxon>
        <taxon>Pseudomonadati</taxon>
        <taxon>Spirochaetota</taxon>
        <taxon>Spirochaetia</taxon>
        <taxon>Spirochaetales</taxon>
        <taxon>Borreliaceae</taxon>
        <taxon>Borreliella</taxon>
    </lineage>
</organism>
<feature type="chain" id="PRO_0000181657" description="tRNA(Ile)-lysidine synthase">
    <location>
        <begin position="1"/>
        <end position="440"/>
    </location>
</feature>
<feature type="binding site" evidence="1">
    <location>
        <begin position="31"/>
        <end position="36"/>
    </location>
    <ligand>
        <name>ATP</name>
        <dbReference type="ChEBI" id="CHEBI:30616"/>
    </ligand>
</feature>
<comment type="function">
    <text evidence="1">Ligates lysine onto the cytidine present at position 34 of the AUA codon-specific tRNA(Ile) that contains the anticodon CAU, in an ATP-dependent manner. Cytidine is converted to lysidine, thus changing the amino acid specificity of the tRNA from methionine to isoleucine.</text>
</comment>
<comment type="catalytic activity">
    <reaction evidence="1">
        <text>cytidine(34) in tRNA(Ile2) + L-lysine + ATP = lysidine(34) in tRNA(Ile2) + AMP + diphosphate + H(+)</text>
        <dbReference type="Rhea" id="RHEA:43744"/>
        <dbReference type="Rhea" id="RHEA-COMP:10625"/>
        <dbReference type="Rhea" id="RHEA-COMP:10670"/>
        <dbReference type="ChEBI" id="CHEBI:15378"/>
        <dbReference type="ChEBI" id="CHEBI:30616"/>
        <dbReference type="ChEBI" id="CHEBI:32551"/>
        <dbReference type="ChEBI" id="CHEBI:33019"/>
        <dbReference type="ChEBI" id="CHEBI:82748"/>
        <dbReference type="ChEBI" id="CHEBI:83665"/>
        <dbReference type="ChEBI" id="CHEBI:456215"/>
        <dbReference type="EC" id="6.3.4.19"/>
    </reaction>
</comment>
<comment type="subcellular location">
    <subcellularLocation>
        <location evidence="1">Cytoplasm</location>
    </subcellularLocation>
</comment>
<comment type="domain">
    <text>The N-terminal region contains the highly conserved SGGXDS motif, predicted to be a P-loop motif involved in ATP binding.</text>
</comment>
<comment type="similarity">
    <text evidence="1">Belongs to the tRNA(Ile)-lysidine synthase family.</text>
</comment>
<dbReference type="EC" id="6.3.4.19" evidence="1"/>
<dbReference type="EMBL" id="AE000783">
    <property type="protein sequence ID" value="AAC67121.1"/>
    <property type="molecule type" value="Genomic_DNA"/>
</dbReference>
<dbReference type="PIR" id="C70198">
    <property type="entry name" value="C70198"/>
</dbReference>
<dbReference type="RefSeq" id="NP_212922.1">
    <property type="nucleotide sequence ID" value="NC_001318.1"/>
</dbReference>
<dbReference type="RefSeq" id="WP_002657033.1">
    <property type="nucleotide sequence ID" value="NC_001318.1"/>
</dbReference>
<dbReference type="SMR" id="O51728"/>
<dbReference type="STRING" id="224326.BB_0788"/>
<dbReference type="PaxDb" id="224326-BB_0788"/>
<dbReference type="EnsemblBacteria" id="AAC67121">
    <property type="protein sequence ID" value="AAC67121"/>
    <property type="gene ID" value="BB_0788"/>
</dbReference>
<dbReference type="GeneID" id="56567367"/>
<dbReference type="KEGG" id="bbu:BB_0788"/>
<dbReference type="PATRIC" id="fig|224326.49.peg.1180"/>
<dbReference type="HOGENOM" id="CLU_050646_0_0_12"/>
<dbReference type="OrthoDB" id="9807403at2"/>
<dbReference type="Proteomes" id="UP000001807">
    <property type="component" value="Chromosome"/>
</dbReference>
<dbReference type="GO" id="GO:0005737">
    <property type="term" value="C:cytoplasm"/>
    <property type="evidence" value="ECO:0007669"/>
    <property type="project" value="UniProtKB-SubCell"/>
</dbReference>
<dbReference type="GO" id="GO:0005524">
    <property type="term" value="F:ATP binding"/>
    <property type="evidence" value="ECO:0007669"/>
    <property type="project" value="UniProtKB-UniRule"/>
</dbReference>
<dbReference type="GO" id="GO:0032267">
    <property type="term" value="F:tRNA(Ile)-lysidine synthase activity"/>
    <property type="evidence" value="ECO:0007669"/>
    <property type="project" value="UniProtKB-EC"/>
</dbReference>
<dbReference type="GO" id="GO:0006400">
    <property type="term" value="P:tRNA modification"/>
    <property type="evidence" value="ECO:0007669"/>
    <property type="project" value="UniProtKB-UniRule"/>
</dbReference>
<dbReference type="CDD" id="cd01992">
    <property type="entry name" value="TilS_N"/>
    <property type="match status" value="1"/>
</dbReference>
<dbReference type="Gene3D" id="3.40.50.620">
    <property type="entry name" value="HUPs"/>
    <property type="match status" value="1"/>
</dbReference>
<dbReference type="HAMAP" id="MF_01161">
    <property type="entry name" value="tRNA_Ile_lys_synt"/>
    <property type="match status" value="1"/>
</dbReference>
<dbReference type="InterPro" id="IPR014729">
    <property type="entry name" value="Rossmann-like_a/b/a_fold"/>
</dbReference>
<dbReference type="InterPro" id="IPR011063">
    <property type="entry name" value="TilS/TtcA_N"/>
</dbReference>
<dbReference type="InterPro" id="IPR012094">
    <property type="entry name" value="tRNA_Ile_lys_synt"/>
</dbReference>
<dbReference type="InterPro" id="IPR012795">
    <property type="entry name" value="tRNA_Ile_lys_synt_N"/>
</dbReference>
<dbReference type="NCBIfam" id="TIGR02432">
    <property type="entry name" value="lysidine_TilS_N"/>
    <property type="match status" value="1"/>
</dbReference>
<dbReference type="PANTHER" id="PTHR43033">
    <property type="entry name" value="TRNA(ILE)-LYSIDINE SYNTHASE-RELATED"/>
    <property type="match status" value="1"/>
</dbReference>
<dbReference type="PANTHER" id="PTHR43033:SF1">
    <property type="entry name" value="TRNA(ILE)-LYSIDINE SYNTHASE-RELATED"/>
    <property type="match status" value="1"/>
</dbReference>
<dbReference type="Pfam" id="PF01171">
    <property type="entry name" value="ATP_bind_3"/>
    <property type="match status" value="1"/>
</dbReference>
<dbReference type="SUPFAM" id="SSF52402">
    <property type="entry name" value="Adenine nucleotide alpha hydrolases-like"/>
    <property type="match status" value="1"/>
</dbReference>
<sequence length="440" mass="51472">MHFLDENIQIKIDKFYKKNSLDKNRVIVAFSGGADSTALLLNLKYYLSNNVIAFYFAHFIRSDNEQNQEIEHVKGFCDLYNIALQIKKCDIDIKSESARLGVSIEELARKFRYIALENALKENGANYIALAHNENDQIETIIMRFFQGSFLDGLSGIPSVNRNIIRPLLEVSRLEIENFLSLNNIGFFVDSTNAQNLYLRNRVRNNLLPAIKKVFKGYEKCLKRISEFSKEFADYFGKDEFFPVEKGKYYYSFDLKTFLDFPKYLVFRLIFKILNSEGIAAKVSYKALNEAFKVEINRKKNNVLLKTNDFFLEKRHNKINLIFKRDEKFYKPFDFILEVGKWHSLSLGKILLKYLECNAASVSRLKCCSYEFRYKFFKDRLKAKKFFSKFIRCNPAYLMLLALDNRLIGIIDLNTLNLVWSEKSILKKINISLIGGLLKE</sequence>
<accession>O51728</accession>
<reference key="1">
    <citation type="journal article" date="1997" name="Nature">
        <title>Genomic sequence of a Lyme disease spirochaete, Borrelia burgdorferi.</title>
        <authorList>
            <person name="Fraser C.M."/>
            <person name="Casjens S."/>
            <person name="Huang W.M."/>
            <person name="Sutton G.G."/>
            <person name="Clayton R.A."/>
            <person name="Lathigra R."/>
            <person name="White O."/>
            <person name="Ketchum K.A."/>
            <person name="Dodson R.J."/>
            <person name="Hickey E.K."/>
            <person name="Gwinn M.L."/>
            <person name="Dougherty B.A."/>
            <person name="Tomb J.-F."/>
            <person name="Fleischmann R.D."/>
            <person name="Richardson D.L."/>
            <person name="Peterson J.D."/>
            <person name="Kerlavage A.R."/>
            <person name="Quackenbush J."/>
            <person name="Salzberg S.L."/>
            <person name="Hanson M."/>
            <person name="van Vugt R."/>
            <person name="Palmer N."/>
            <person name="Adams M.D."/>
            <person name="Gocayne J.D."/>
            <person name="Weidman J.F."/>
            <person name="Utterback T.R."/>
            <person name="Watthey L."/>
            <person name="McDonald L.A."/>
            <person name="Artiach P."/>
            <person name="Bowman C."/>
            <person name="Garland S.A."/>
            <person name="Fujii C."/>
            <person name="Cotton M.D."/>
            <person name="Horst K."/>
            <person name="Roberts K.M."/>
            <person name="Hatch B."/>
            <person name="Smith H.O."/>
            <person name="Venter J.C."/>
        </authorList>
    </citation>
    <scope>NUCLEOTIDE SEQUENCE [LARGE SCALE GENOMIC DNA]</scope>
    <source>
        <strain>ATCC 35210 / DSM 4680 / CIP 102532 / B31</strain>
    </source>
</reference>
<gene>
    <name evidence="1" type="primary">tilS</name>
    <name type="ordered locus">BB_0788</name>
</gene>
<protein>
    <recommendedName>
        <fullName evidence="1">tRNA(Ile)-lysidine synthase</fullName>
        <ecNumber evidence="1">6.3.4.19</ecNumber>
    </recommendedName>
    <alternativeName>
        <fullName evidence="1">tRNA(Ile)-2-lysyl-cytidine synthase</fullName>
    </alternativeName>
    <alternativeName>
        <fullName evidence="1">tRNA(Ile)-lysidine synthetase</fullName>
    </alternativeName>
</protein>
<name>TILS_BORBU</name>
<keyword id="KW-0067">ATP-binding</keyword>
<keyword id="KW-0963">Cytoplasm</keyword>
<keyword id="KW-0436">Ligase</keyword>
<keyword id="KW-0547">Nucleotide-binding</keyword>
<keyword id="KW-1185">Reference proteome</keyword>
<keyword id="KW-0819">tRNA processing</keyword>
<evidence type="ECO:0000255" key="1">
    <source>
        <dbReference type="HAMAP-Rule" id="MF_01161"/>
    </source>
</evidence>
<proteinExistence type="inferred from homology"/>